<accession>B7M8Y3</accession>
<feature type="chain" id="PRO_1000137748" description="Curved DNA-binding protein">
    <location>
        <begin position="1"/>
        <end position="306"/>
    </location>
</feature>
<feature type="domain" description="J" evidence="1">
    <location>
        <begin position="5"/>
        <end position="69"/>
    </location>
</feature>
<sequence>MELKDYYAIMGVKPTDDLKTIKTAYRRLARKYHPDVSKEPDAEARFKEVAEAWEVLSDEQRRAEYDQMWQHRNDPQFNRQFHHGDGQSFNAEDFDDIFSSIFGQHARQSRQRPAARGHDIEIEVAVFLEETLTEHKRTISYNLPVYNAFGMIEQEIPKTLNVKIPAGVGNGQRIRLKGQGTPGENGGPNGDLWLVIHIAPHPLFDIVGQDLEIVVPVSPWEAALGAKVTVPTLKESILLTIPPGSQAGQRLRVKGKGLVSKKQTGDLYAVLKIVMPPKPDENTAALWQQLADAQSSFDPRKDWGKA</sequence>
<organism>
    <name type="scientific">Escherichia coli O8 (strain IAI1)</name>
    <dbReference type="NCBI Taxonomy" id="585034"/>
    <lineage>
        <taxon>Bacteria</taxon>
        <taxon>Pseudomonadati</taxon>
        <taxon>Pseudomonadota</taxon>
        <taxon>Gammaproteobacteria</taxon>
        <taxon>Enterobacterales</taxon>
        <taxon>Enterobacteriaceae</taxon>
        <taxon>Escherichia</taxon>
    </lineage>
</organism>
<gene>
    <name evidence="1" type="primary">cbpA</name>
    <name type="ordered locus">ECIAI1_1043</name>
</gene>
<protein>
    <recommendedName>
        <fullName evidence="1">Curved DNA-binding protein</fullName>
    </recommendedName>
</protein>
<dbReference type="EMBL" id="CU928160">
    <property type="protein sequence ID" value="CAQ97907.1"/>
    <property type="molecule type" value="Genomic_DNA"/>
</dbReference>
<dbReference type="RefSeq" id="WP_000420617.1">
    <property type="nucleotide sequence ID" value="NC_011741.1"/>
</dbReference>
<dbReference type="SMR" id="B7M8Y3"/>
<dbReference type="KEGG" id="ecr:ECIAI1_1043"/>
<dbReference type="HOGENOM" id="CLU_017633_0_0_6"/>
<dbReference type="GO" id="GO:0005737">
    <property type="term" value="C:cytoplasm"/>
    <property type="evidence" value="ECO:0007669"/>
    <property type="project" value="UniProtKB-UniRule"/>
</dbReference>
<dbReference type="GO" id="GO:0009295">
    <property type="term" value="C:nucleoid"/>
    <property type="evidence" value="ECO:0007669"/>
    <property type="project" value="UniProtKB-SubCell"/>
</dbReference>
<dbReference type="GO" id="GO:0003681">
    <property type="term" value="F:bent DNA binding"/>
    <property type="evidence" value="ECO:0007669"/>
    <property type="project" value="UniProtKB-UniRule"/>
</dbReference>
<dbReference type="GO" id="GO:0051082">
    <property type="term" value="F:unfolded protein binding"/>
    <property type="evidence" value="ECO:0007669"/>
    <property type="project" value="InterPro"/>
</dbReference>
<dbReference type="GO" id="GO:0051085">
    <property type="term" value="P:chaperone cofactor-dependent protein refolding"/>
    <property type="evidence" value="ECO:0007669"/>
    <property type="project" value="TreeGrafter"/>
</dbReference>
<dbReference type="GO" id="GO:0042026">
    <property type="term" value="P:protein refolding"/>
    <property type="evidence" value="ECO:0007669"/>
    <property type="project" value="TreeGrafter"/>
</dbReference>
<dbReference type="CDD" id="cd06257">
    <property type="entry name" value="DnaJ"/>
    <property type="match status" value="1"/>
</dbReference>
<dbReference type="CDD" id="cd10747">
    <property type="entry name" value="DnaJ_C"/>
    <property type="match status" value="1"/>
</dbReference>
<dbReference type="FunFam" id="1.10.287.110:FF:000013">
    <property type="entry name" value="Curved DNA-binding protein"/>
    <property type="match status" value="1"/>
</dbReference>
<dbReference type="FunFam" id="2.60.260.20:FF:000008">
    <property type="entry name" value="Curved DNA-binding protein"/>
    <property type="match status" value="1"/>
</dbReference>
<dbReference type="FunFam" id="2.60.260.20:FF:000010">
    <property type="entry name" value="Curved DNA-binding protein"/>
    <property type="match status" value="1"/>
</dbReference>
<dbReference type="Gene3D" id="1.10.287.110">
    <property type="entry name" value="DnaJ domain"/>
    <property type="match status" value="1"/>
</dbReference>
<dbReference type="Gene3D" id="1.20.5.460">
    <property type="entry name" value="Single helix bin"/>
    <property type="match status" value="1"/>
</dbReference>
<dbReference type="Gene3D" id="2.60.260.20">
    <property type="entry name" value="Urease metallochaperone UreE, N-terminal domain"/>
    <property type="match status" value="2"/>
</dbReference>
<dbReference type="HAMAP" id="MF_01154">
    <property type="entry name" value="CbpA"/>
    <property type="match status" value="1"/>
</dbReference>
<dbReference type="InterPro" id="IPR023859">
    <property type="entry name" value="DNA-bd_curved-DNA"/>
</dbReference>
<dbReference type="InterPro" id="IPR002939">
    <property type="entry name" value="DnaJ_C"/>
</dbReference>
<dbReference type="InterPro" id="IPR001623">
    <property type="entry name" value="DnaJ_domain"/>
</dbReference>
<dbReference type="InterPro" id="IPR018253">
    <property type="entry name" value="DnaJ_domain_CS"/>
</dbReference>
<dbReference type="InterPro" id="IPR008971">
    <property type="entry name" value="HSP40/DnaJ_pept-bd"/>
</dbReference>
<dbReference type="InterPro" id="IPR036869">
    <property type="entry name" value="J_dom_sf"/>
</dbReference>
<dbReference type="NCBIfam" id="NF007618">
    <property type="entry name" value="PRK10266.1"/>
    <property type="match status" value="1"/>
</dbReference>
<dbReference type="PANTHER" id="PTHR43096">
    <property type="entry name" value="DNAJ HOMOLOG 1, MITOCHONDRIAL-RELATED"/>
    <property type="match status" value="1"/>
</dbReference>
<dbReference type="PANTHER" id="PTHR43096:SF52">
    <property type="entry name" value="DNAJ HOMOLOG 1, MITOCHONDRIAL-RELATED"/>
    <property type="match status" value="1"/>
</dbReference>
<dbReference type="Pfam" id="PF00226">
    <property type="entry name" value="DnaJ"/>
    <property type="match status" value="1"/>
</dbReference>
<dbReference type="Pfam" id="PF01556">
    <property type="entry name" value="DnaJ_C"/>
    <property type="match status" value="1"/>
</dbReference>
<dbReference type="PRINTS" id="PR00625">
    <property type="entry name" value="JDOMAIN"/>
</dbReference>
<dbReference type="SMART" id="SM00271">
    <property type="entry name" value="DnaJ"/>
    <property type="match status" value="1"/>
</dbReference>
<dbReference type="SUPFAM" id="SSF46565">
    <property type="entry name" value="Chaperone J-domain"/>
    <property type="match status" value="1"/>
</dbReference>
<dbReference type="SUPFAM" id="SSF49493">
    <property type="entry name" value="HSP40/DnaJ peptide-binding domain"/>
    <property type="match status" value="2"/>
</dbReference>
<dbReference type="PROSITE" id="PS00636">
    <property type="entry name" value="DNAJ_1"/>
    <property type="match status" value="1"/>
</dbReference>
<dbReference type="PROSITE" id="PS50076">
    <property type="entry name" value="DNAJ_2"/>
    <property type="match status" value="1"/>
</dbReference>
<reference key="1">
    <citation type="journal article" date="2009" name="PLoS Genet.">
        <title>Organised genome dynamics in the Escherichia coli species results in highly diverse adaptive paths.</title>
        <authorList>
            <person name="Touchon M."/>
            <person name="Hoede C."/>
            <person name="Tenaillon O."/>
            <person name="Barbe V."/>
            <person name="Baeriswyl S."/>
            <person name="Bidet P."/>
            <person name="Bingen E."/>
            <person name="Bonacorsi S."/>
            <person name="Bouchier C."/>
            <person name="Bouvet O."/>
            <person name="Calteau A."/>
            <person name="Chiapello H."/>
            <person name="Clermont O."/>
            <person name="Cruveiller S."/>
            <person name="Danchin A."/>
            <person name="Diard M."/>
            <person name="Dossat C."/>
            <person name="Karoui M.E."/>
            <person name="Frapy E."/>
            <person name="Garry L."/>
            <person name="Ghigo J.M."/>
            <person name="Gilles A.M."/>
            <person name="Johnson J."/>
            <person name="Le Bouguenec C."/>
            <person name="Lescat M."/>
            <person name="Mangenot S."/>
            <person name="Martinez-Jehanne V."/>
            <person name="Matic I."/>
            <person name="Nassif X."/>
            <person name="Oztas S."/>
            <person name="Petit M.A."/>
            <person name="Pichon C."/>
            <person name="Rouy Z."/>
            <person name="Ruf C.S."/>
            <person name="Schneider D."/>
            <person name="Tourret J."/>
            <person name="Vacherie B."/>
            <person name="Vallenet D."/>
            <person name="Medigue C."/>
            <person name="Rocha E.P.C."/>
            <person name="Denamur E."/>
        </authorList>
    </citation>
    <scope>NUCLEOTIDE SEQUENCE [LARGE SCALE GENOMIC DNA]</scope>
    <source>
        <strain>IAI1</strain>
    </source>
</reference>
<comment type="function">
    <text evidence="1">DNA-binding protein that preferentially recognizes a curved DNA sequence. It is probably a functional analog of DnaJ; displays overlapping activities with DnaJ, but functions under different conditions, probably acting as a molecular chaperone in an adaptive response to environmental stresses other than heat shock. Lacks autonomous chaperone activity; binds native substrates and targets them for recognition by DnaK. Its activity is inhibited by the binding of CbpM.</text>
</comment>
<comment type="subcellular location">
    <subcellularLocation>
        <location evidence="1">Cytoplasm</location>
        <location evidence="1">Nucleoid</location>
    </subcellularLocation>
</comment>
<proteinExistence type="inferred from homology"/>
<keyword id="KW-0143">Chaperone</keyword>
<keyword id="KW-0963">Cytoplasm</keyword>
<keyword id="KW-0238">DNA-binding</keyword>
<name>CBPA_ECO8A</name>
<evidence type="ECO:0000255" key="1">
    <source>
        <dbReference type="HAMAP-Rule" id="MF_01154"/>
    </source>
</evidence>